<name>TAUB1_PARXL</name>
<protein>
    <recommendedName>
        <fullName evidence="1">Taurine import ATP-binding protein TauB 1</fullName>
        <ecNumber evidence="1">7.6.2.7</ecNumber>
    </recommendedName>
</protein>
<comment type="function">
    <text evidence="1">Part of the ABC transporter complex TauABC involved in taurine import. Responsible for energy coupling to the transport system.</text>
</comment>
<comment type="catalytic activity">
    <reaction evidence="1">
        <text>taurine(out) + ATP + H2O = taurine(in) + ADP + phosphate + H(+)</text>
        <dbReference type="Rhea" id="RHEA:14613"/>
        <dbReference type="ChEBI" id="CHEBI:15377"/>
        <dbReference type="ChEBI" id="CHEBI:15378"/>
        <dbReference type="ChEBI" id="CHEBI:30616"/>
        <dbReference type="ChEBI" id="CHEBI:43474"/>
        <dbReference type="ChEBI" id="CHEBI:456216"/>
        <dbReference type="ChEBI" id="CHEBI:507393"/>
        <dbReference type="EC" id="7.6.2.7"/>
    </reaction>
</comment>
<comment type="subunit">
    <text evidence="1">The complex is composed of two ATP-binding proteins (TauB), two transmembrane proteins (TauC) and a solute-binding protein (TauA).</text>
</comment>
<comment type="subcellular location">
    <subcellularLocation>
        <location evidence="1">Cell inner membrane</location>
        <topology evidence="1">Peripheral membrane protein</topology>
    </subcellularLocation>
</comment>
<comment type="similarity">
    <text evidence="1">Belongs to the ABC transporter superfamily. Taurine importer (TC 3.A.1.17.1) family.</text>
</comment>
<gene>
    <name evidence="1" type="primary">tauB1</name>
    <name type="ordered locus">Bxeno_A0254</name>
    <name type="ORF">Bxe_A4208</name>
</gene>
<organism>
    <name type="scientific">Paraburkholderia xenovorans (strain LB400)</name>
    <dbReference type="NCBI Taxonomy" id="266265"/>
    <lineage>
        <taxon>Bacteria</taxon>
        <taxon>Pseudomonadati</taxon>
        <taxon>Pseudomonadota</taxon>
        <taxon>Betaproteobacteria</taxon>
        <taxon>Burkholderiales</taxon>
        <taxon>Burkholderiaceae</taxon>
        <taxon>Paraburkholderia</taxon>
    </lineage>
</organism>
<evidence type="ECO:0000255" key="1">
    <source>
        <dbReference type="HAMAP-Rule" id="MF_01714"/>
    </source>
</evidence>
<keyword id="KW-0067">ATP-binding</keyword>
<keyword id="KW-0997">Cell inner membrane</keyword>
<keyword id="KW-1003">Cell membrane</keyword>
<keyword id="KW-0472">Membrane</keyword>
<keyword id="KW-0547">Nucleotide-binding</keyword>
<keyword id="KW-1185">Reference proteome</keyword>
<keyword id="KW-1278">Translocase</keyword>
<keyword id="KW-0813">Transport</keyword>
<sequence length="265" mass="29365">MSGLEIRQLQVAYEGARGAAPHVALADVDLRIEPGEFVVALGASGCGKTTLLNCIAGFIQPTEGEVRLNGEPVLGPGADRGVVFQKYALMPWLDVLDNVALGLRFQRVPKAERERIALEMLKLVGLEKHARSQVYALSGGMQQRVGIARALASDPQVLLMDEPMGALDAMTRESMQELVLDVWGRTRKTVFFITHSVEEALFLATRLVVMTPGPGRIADSYDLPFAQRFLQTRDARAVKSSADFIEWRERLVRRLHERNQEEVVS</sequence>
<dbReference type="EC" id="7.6.2.7" evidence="1"/>
<dbReference type="EMBL" id="CP000270">
    <property type="protein sequence ID" value="ABE28792.1"/>
    <property type="molecule type" value="Genomic_DNA"/>
</dbReference>
<dbReference type="RefSeq" id="WP_011486633.1">
    <property type="nucleotide sequence ID" value="NC_007951.1"/>
</dbReference>
<dbReference type="SMR" id="Q146E7"/>
<dbReference type="STRING" id="266265.Bxe_A4208"/>
<dbReference type="KEGG" id="bxb:DR64_1885"/>
<dbReference type="KEGG" id="bxe:Bxe_A4208"/>
<dbReference type="PATRIC" id="fig|266265.5.peg.267"/>
<dbReference type="eggNOG" id="COG4525">
    <property type="taxonomic scope" value="Bacteria"/>
</dbReference>
<dbReference type="OrthoDB" id="9783039at2"/>
<dbReference type="Proteomes" id="UP000001817">
    <property type="component" value="Chromosome 1"/>
</dbReference>
<dbReference type="GO" id="GO:0005886">
    <property type="term" value="C:plasma membrane"/>
    <property type="evidence" value="ECO:0007669"/>
    <property type="project" value="UniProtKB-SubCell"/>
</dbReference>
<dbReference type="GO" id="GO:0015411">
    <property type="term" value="F:ABC-type taurine transporter transporter activity"/>
    <property type="evidence" value="ECO:0007669"/>
    <property type="project" value="UniProtKB-EC"/>
</dbReference>
<dbReference type="GO" id="GO:0005524">
    <property type="term" value="F:ATP binding"/>
    <property type="evidence" value="ECO:0007669"/>
    <property type="project" value="UniProtKB-KW"/>
</dbReference>
<dbReference type="GO" id="GO:0016887">
    <property type="term" value="F:ATP hydrolysis activity"/>
    <property type="evidence" value="ECO:0007669"/>
    <property type="project" value="InterPro"/>
</dbReference>
<dbReference type="CDD" id="cd03293">
    <property type="entry name" value="ABC_NrtD_SsuB_transporters"/>
    <property type="match status" value="1"/>
</dbReference>
<dbReference type="Gene3D" id="3.40.50.300">
    <property type="entry name" value="P-loop containing nucleotide triphosphate hydrolases"/>
    <property type="match status" value="1"/>
</dbReference>
<dbReference type="InterPro" id="IPR003593">
    <property type="entry name" value="AAA+_ATPase"/>
</dbReference>
<dbReference type="InterPro" id="IPR003439">
    <property type="entry name" value="ABC_transporter-like_ATP-bd"/>
</dbReference>
<dbReference type="InterPro" id="IPR017871">
    <property type="entry name" value="ABC_transporter-like_CS"/>
</dbReference>
<dbReference type="InterPro" id="IPR050166">
    <property type="entry name" value="ABC_transporter_ATP-bind"/>
</dbReference>
<dbReference type="InterPro" id="IPR027417">
    <property type="entry name" value="P-loop_NTPase"/>
</dbReference>
<dbReference type="PANTHER" id="PTHR42788:SF18">
    <property type="entry name" value="TAURINE IMPORT ATP-BINDING PROTEIN TAUB"/>
    <property type="match status" value="1"/>
</dbReference>
<dbReference type="PANTHER" id="PTHR42788">
    <property type="entry name" value="TAURINE IMPORT ATP-BINDING PROTEIN-RELATED"/>
    <property type="match status" value="1"/>
</dbReference>
<dbReference type="Pfam" id="PF00005">
    <property type="entry name" value="ABC_tran"/>
    <property type="match status" value="1"/>
</dbReference>
<dbReference type="SMART" id="SM00382">
    <property type="entry name" value="AAA"/>
    <property type="match status" value="1"/>
</dbReference>
<dbReference type="SUPFAM" id="SSF52540">
    <property type="entry name" value="P-loop containing nucleoside triphosphate hydrolases"/>
    <property type="match status" value="1"/>
</dbReference>
<dbReference type="PROSITE" id="PS00211">
    <property type="entry name" value="ABC_TRANSPORTER_1"/>
    <property type="match status" value="1"/>
</dbReference>
<dbReference type="PROSITE" id="PS50893">
    <property type="entry name" value="ABC_TRANSPORTER_2"/>
    <property type="match status" value="1"/>
</dbReference>
<dbReference type="PROSITE" id="PS51250">
    <property type="entry name" value="TAUB"/>
    <property type="match status" value="1"/>
</dbReference>
<proteinExistence type="inferred from homology"/>
<reference key="1">
    <citation type="journal article" date="2006" name="Proc. Natl. Acad. Sci. U.S.A.">
        <title>Burkholderia xenovorans LB400 harbors a multi-replicon, 9.73-Mbp genome shaped for versatility.</title>
        <authorList>
            <person name="Chain P.S.G."/>
            <person name="Denef V.J."/>
            <person name="Konstantinidis K.T."/>
            <person name="Vergez L.M."/>
            <person name="Agullo L."/>
            <person name="Reyes V.L."/>
            <person name="Hauser L."/>
            <person name="Cordova M."/>
            <person name="Gomez L."/>
            <person name="Gonzalez M."/>
            <person name="Land M."/>
            <person name="Lao V."/>
            <person name="Larimer F."/>
            <person name="LiPuma J.J."/>
            <person name="Mahenthiralingam E."/>
            <person name="Malfatti S.A."/>
            <person name="Marx C.J."/>
            <person name="Parnell J.J."/>
            <person name="Ramette A."/>
            <person name="Richardson P."/>
            <person name="Seeger M."/>
            <person name="Smith D."/>
            <person name="Spilker T."/>
            <person name="Sul W.J."/>
            <person name="Tsoi T.V."/>
            <person name="Ulrich L.E."/>
            <person name="Zhulin I.B."/>
            <person name="Tiedje J.M."/>
        </authorList>
    </citation>
    <scope>NUCLEOTIDE SEQUENCE [LARGE SCALE GENOMIC DNA]</scope>
    <source>
        <strain>LB400</strain>
    </source>
</reference>
<accession>Q146E7</accession>
<feature type="chain" id="PRO_0000275826" description="Taurine import ATP-binding protein TauB 1">
    <location>
        <begin position="1"/>
        <end position="265"/>
    </location>
</feature>
<feature type="domain" description="ABC transporter" evidence="1">
    <location>
        <begin position="6"/>
        <end position="237"/>
    </location>
</feature>
<feature type="binding site" evidence="1">
    <location>
        <begin position="42"/>
        <end position="49"/>
    </location>
    <ligand>
        <name>ATP</name>
        <dbReference type="ChEBI" id="CHEBI:30616"/>
    </ligand>
</feature>